<dbReference type="EC" id="3.5.4.27"/>
<dbReference type="EMBL" id="AF142655">
    <property type="protein sequence ID" value="AAD55905.1"/>
    <property type="molecule type" value="Genomic_DNA"/>
</dbReference>
<dbReference type="SMR" id="Q9RPW2"/>
<dbReference type="BRENDA" id="3.5.4.27">
    <property type="organism ID" value="3314"/>
</dbReference>
<dbReference type="UniPathway" id="UPA00562">
    <property type="reaction ID" value="UER00703"/>
</dbReference>
<dbReference type="GO" id="GO:0005737">
    <property type="term" value="C:cytoplasm"/>
    <property type="evidence" value="ECO:0007669"/>
    <property type="project" value="UniProtKB-SubCell"/>
</dbReference>
<dbReference type="GO" id="GO:0018759">
    <property type="term" value="F:methenyltetrahydromethanopterin cyclohydrolase activity"/>
    <property type="evidence" value="ECO:0007669"/>
    <property type="project" value="UniProtKB-EC"/>
</dbReference>
<dbReference type="GO" id="GO:0046294">
    <property type="term" value="P:formaldehyde catabolic process"/>
    <property type="evidence" value="ECO:0007669"/>
    <property type="project" value="UniProtKB-UniPathway"/>
</dbReference>
<dbReference type="GO" id="GO:0006730">
    <property type="term" value="P:one-carbon metabolic process"/>
    <property type="evidence" value="ECO:0007669"/>
    <property type="project" value="UniProtKB-KW"/>
</dbReference>
<dbReference type="Gene3D" id="3.30.1030.10">
    <property type="entry name" value="Methenyltetrahydromethanopterin Cyclohydrolase, Chain A, domain 2"/>
    <property type="match status" value="1"/>
</dbReference>
<dbReference type="InterPro" id="IPR001387">
    <property type="entry name" value="Cro/C1-type_HTH"/>
</dbReference>
<dbReference type="InterPro" id="IPR003209">
    <property type="entry name" value="METHMP_CycHdrlase"/>
</dbReference>
<dbReference type="Pfam" id="PF02289">
    <property type="entry name" value="MCH"/>
    <property type="match status" value="1"/>
</dbReference>
<dbReference type="SUPFAM" id="SSF56199">
    <property type="entry name" value="Methenyltetrahydromethanopterin cyclohydrolase"/>
    <property type="match status" value="1"/>
</dbReference>
<name>MCH_METRU</name>
<proteinExistence type="inferred from homology"/>
<evidence type="ECO:0000250" key="1"/>
<evidence type="ECO:0000305" key="2"/>
<comment type="function">
    <text evidence="1">Catalyzes the hydrolysis of methenyl-H(4)MPT(+) to 5-formyl-H(4)MPT.</text>
</comment>
<comment type="catalytic activity">
    <reaction>
        <text>5,10-methenyl-5,6,7,8-tetrahydromethanopterin + H2O = N(5)-formyl-5,6,7,8-tetrahydromethanopterin + H(+)</text>
        <dbReference type="Rhea" id="RHEA:19053"/>
        <dbReference type="ChEBI" id="CHEBI:15377"/>
        <dbReference type="ChEBI" id="CHEBI:15378"/>
        <dbReference type="ChEBI" id="CHEBI:58018"/>
        <dbReference type="ChEBI" id="CHEBI:58337"/>
        <dbReference type="EC" id="3.5.4.27"/>
    </reaction>
</comment>
<comment type="pathway">
    <text>One-carbon metabolism; formaldehyde degradation; formate from formaldehyde (H(4)MPT route): step 3/5.</text>
</comment>
<comment type="subcellular location">
    <subcellularLocation>
        <location evidence="1">Cytoplasm</location>
    </subcellularLocation>
</comment>
<comment type="similarity">
    <text evidence="2">Belongs to the MCH family.</text>
</comment>
<feature type="chain" id="PRO_0000140893" description="Methenyltetrahydromethanopterin cyclohydrolase">
    <location>
        <begin position="1" status="less than"/>
        <end position="132" status="greater than"/>
    </location>
</feature>
<feature type="non-terminal residue">
    <location>
        <position position="1"/>
    </location>
</feature>
<feature type="non-terminal residue">
    <location>
        <position position="132"/>
    </location>
</feature>
<reference key="1">
    <citation type="journal article" date="1999" name="J. Bacteriol.">
        <title>Distribution of tetrahydromethanopterin-dependent enzymes in methylotrophic bacteria and phylogeny of methenyl tetrahydromethanopterin cyclohydrolases.</title>
        <authorList>
            <person name="Vorholt J.A."/>
            <person name="Chistoserdova L.V."/>
            <person name="Stolyar S.M."/>
            <person name="Thauer R.K."/>
            <person name="Lidstrom M.E."/>
        </authorList>
    </citation>
    <scope>NUCLEOTIDE SEQUENCE [GENOMIC DNA]</scope>
    <source>
        <strain>15SH</strain>
    </source>
</reference>
<protein>
    <recommendedName>
        <fullName>Methenyltetrahydromethanopterin cyclohydrolase</fullName>
        <ecNumber>3.5.4.27</ecNumber>
    </recommendedName>
    <alternativeName>
        <fullName>Methenyl-H4MPT cyclohydrolase</fullName>
    </alternativeName>
</protein>
<organism>
    <name type="scientific">Methylomonas rubra</name>
    <dbReference type="NCBI Taxonomy" id="424"/>
    <lineage>
        <taxon>Bacteria</taxon>
        <taxon>Pseudomonadati</taxon>
        <taxon>Pseudomonadota</taxon>
        <taxon>Gammaproteobacteria</taxon>
        <taxon>Methylococcales</taxon>
        <taxon>Methylococcaceae</taxon>
        <taxon>Methylomonas</taxon>
    </lineage>
</organism>
<gene>
    <name type="primary">mch</name>
</gene>
<sequence>SLSHGKYYALGSGPARAMATKVKDGAVEPVEELYKELEYRDSHDKTVLVIENDAVPPVEIVEKVAAACGVSPADLTIIVTPTSSLAGGVQVVGRVLEVAMHKAHALHFPLENIVDGTGSAPVCPPHPNFVKA</sequence>
<accession>Q9RPW2</accession>
<keyword id="KW-0963">Cytoplasm</keyword>
<keyword id="KW-0378">Hydrolase</keyword>
<keyword id="KW-0554">One-carbon metabolism</keyword>